<sequence>MYALLSVYDKTGLLELAKALTSKGVKLLGSGGTAKMIRESGMEVADVSSITNAPEILGGRVKTLHPAVHGGILARDIPSDEKDLVEQSIEKIDIVVCNLYPFRETIAKPNVTIPEAVEEIDIGGVTLLRAAAKNHARVTILSDPADYATFTDKFLSDKLTQDDRNTYALKAFASTASYDAAITDYFRKQYAAGVDQLTLRYGANPHQSPAQAFMEQGPLPFKVLCGSPGYINLMDALNSWPLVKELRENIGIPAAASFKHVSPAGAAVGLPLSDVEKKVYFVSDITEFTPLACAYARARGADRMSSFGDFIALSDTVDVCTARIISREVSDGVIAPGYEPEALELLKKKKGGKYCVLQMDPKYVPAEIETRQVYGISLQQHRNHAKIDFSLFEKVVSKNKDLPKSALIDLVIATTALKYTQSNSVCYAKNGMVVGLGAGQQSRIHCNRLAGDKADNWWLRHHPKVLGMQFKKSAKRPEKSNAIDLYVLDAVPAEGSEREQWESAFETIPEPLTKKEREEFLATCKDVVCASDAFFPFPDNIYRLAQSGVKYVAAPGGSVMDQAVRDTANEFNMVFSEIPLRLFHH</sequence>
<reference key="1">
    <citation type="journal article" date="1998" name="Yeast">
        <title>Molecular cloning and sequence analysis of the Schizosaccharomyces pombe ade10+ gene.</title>
        <authorList>
            <person name="Liedtke C."/>
            <person name="Schmidt H."/>
        </authorList>
    </citation>
    <scope>NUCLEOTIDE SEQUENCE [GENOMIC DNA]</scope>
    <source>
        <strain>972 / ATCC 24843</strain>
    </source>
</reference>
<reference key="2">
    <citation type="journal article" date="2002" name="Nature">
        <title>The genome sequence of Schizosaccharomyces pombe.</title>
        <authorList>
            <person name="Wood V."/>
            <person name="Gwilliam R."/>
            <person name="Rajandream M.A."/>
            <person name="Lyne M.H."/>
            <person name="Lyne R."/>
            <person name="Stewart A."/>
            <person name="Sgouros J.G."/>
            <person name="Peat N."/>
            <person name="Hayles J."/>
            <person name="Baker S.G."/>
            <person name="Basham D."/>
            <person name="Bowman S."/>
            <person name="Brooks K."/>
            <person name="Brown D."/>
            <person name="Brown S."/>
            <person name="Chillingworth T."/>
            <person name="Churcher C.M."/>
            <person name="Collins M."/>
            <person name="Connor R."/>
            <person name="Cronin A."/>
            <person name="Davis P."/>
            <person name="Feltwell T."/>
            <person name="Fraser A."/>
            <person name="Gentles S."/>
            <person name="Goble A."/>
            <person name="Hamlin N."/>
            <person name="Harris D.E."/>
            <person name="Hidalgo J."/>
            <person name="Hodgson G."/>
            <person name="Holroyd S."/>
            <person name="Hornsby T."/>
            <person name="Howarth S."/>
            <person name="Huckle E.J."/>
            <person name="Hunt S."/>
            <person name="Jagels K."/>
            <person name="James K.D."/>
            <person name="Jones L."/>
            <person name="Jones M."/>
            <person name="Leather S."/>
            <person name="McDonald S."/>
            <person name="McLean J."/>
            <person name="Mooney P."/>
            <person name="Moule S."/>
            <person name="Mungall K.L."/>
            <person name="Murphy L.D."/>
            <person name="Niblett D."/>
            <person name="Odell C."/>
            <person name="Oliver K."/>
            <person name="O'Neil S."/>
            <person name="Pearson D."/>
            <person name="Quail M.A."/>
            <person name="Rabbinowitsch E."/>
            <person name="Rutherford K.M."/>
            <person name="Rutter S."/>
            <person name="Saunders D."/>
            <person name="Seeger K."/>
            <person name="Sharp S."/>
            <person name="Skelton J."/>
            <person name="Simmonds M.N."/>
            <person name="Squares R."/>
            <person name="Squares S."/>
            <person name="Stevens K."/>
            <person name="Taylor K."/>
            <person name="Taylor R.G."/>
            <person name="Tivey A."/>
            <person name="Walsh S.V."/>
            <person name="Warren T."/>
            <person name="Whitehead S."/>
            <person name="Woodward J.R."/>
            <person name="Volckaert G."/>
            <person name="Aert R."/>
            <person name="Robben J."/>
            <person name="Grymonprez B."/>
            <person name="Weltjens I."/>
            <person name="Vanstreels E."/>
            <person name="Rieger M."/>
            <person name="Schaefer M."/>
            <person name="Mueller-Auer S."/>
            <person name="Gabel C."/>
            <person name="Fuchs M."/>
            <person name="Duesterhoeft A."/>
            <person name="Fritzc C."/>
            <person name="Holzer E."/>
            <person name="Moestl D."/>
            <person name="Hilbert H."/>
            <person name="Borzym K."/>
            <person name="Langer I."/>
            <person name="Beck A."/>
            <person name="Lehrach H."/>
            <person name="Reinhardt R."/>
            <person name="Pohl T.M."/>
            <person name="Eger P."/>
            <person name="Zimmermann W."/>
            <person name="Wedler H."/>
            <person name="Wambutt R."/>
            <person name="Purnelle B."/>
            <person name="Goffeau A."/>
            <person name="Cadieu E."/>
            <person name="Dreano S."/>
            <person name="Gloux S."/>
            <person name="Lelaure V."/>
            <person name="Mottier S."/>
            <person name="Galibert F."/>
            <person name="Aves S.J."/>
            <person name="Xiang Z."/>
            <person name="Hunt C."/>
            <person name="Moore K."/>
            <person name="Hurst S.M."/>
            <person name="Lucas M."/>
            <person name="Rochet M."/>
            <person name="Gaillardin C."/>
            <person name="Tallada V.A."/>
            <person name="Garzon A."/>
            <person name="Thode G."/>
            <person name="Daga R.R."/>
            <person name="Cruzado L."/>
            <person name="Jimenez J."/>
            <person name="Sanchez M."/>
            <person name="del Rey F."/>
            <person name="Benito J."/>
            <person name="Dominguez A."/>
            <person name="Revuelta J.L."/>
            <person name="Moreno S."/>
            <person name="Armstrong J."/>
            <person name="Forsburg S.L."/>
            <person name="Cerutti L."/>
            <person name="Lowe T."/>
            <person name="McCombie W.R."/>
            <person name="Paulsen I."/>
            <person name="Potashkin J."/>
            <person name="Shpakovski G.V."/>
            <person name="Ussery D."/>
            <person name="Barrell B.G."/>
            <person name="Nurse P."/>
        </authorList>
    </citation>
    <scope>NUCLEOTIDE SEQUENCE [LARGE SCALE GENOMIC DNA]</scope>
    <source>
        <strain>972 / ATCC 24843</strain>
    </source>
</reference>
<reference key="3">
    <citation type="journal article" date="1997" name="DNA Res.">
        <title>Identification of open reading frames in Schizosaccharomyces pombe cDNAs.</title>
        <authorList>
            <person name="Yoshioka S."/>
            <person name="Kato K."/>
            <person name="Nakai K."/>
            <person name="Okayama H."/>
            <person name="Nojima H."/>
        </authorList>
    </citation>
    <scope>NUCLEOTIDE SEQUENCE [LARGE SCALE MRNA] OF 166-585</scope>
    <source>
        <strain>PR745</strain>
    </source>
</reference>
<protein>
    <recommendedName>
        <fullName>Bifunctional purine biosynthesis protein ade10</fullName>
    </recommendedName>
    <domain>
        <recommendedName>
            <fullName>Phosphoribosylaminoimidazolecarboxamide formyltransferase</fullName>
            <ecNumber evidence="3">2.1.2.3</ecNumber>
        </recommendedName>
        <alternativeName>
            <fullName>5-aminoimidazole-4-carboxamide ribonucleotide formyltransferase</fullName>
        </alternativeName>
        <alternativeName>
            <fullName>AICAR transformylase</fullName>
        </alternativeName>
    </domain>
    <domain>
        <recommendedName>
            <fullName evidence="5">Inosine 5'-monophosphate cyclohydrolase</fullName>
            <shortName evidence="5">IMP cyclohydrolase</shortName>
            <ecNumber evidence="3">3.5.4.10</ecNumber>
        </recommendedName>
        <alternativeName>
            <fullName>ATIC</fullName>
        </alternativeName>
        <alternativeName>
            <fullName>IMP synthase</fullName>
        </alternativeName>
        <alternativeName>
            <fullName>Inosinicase</fullName>
        </alternativeName>
    </domain>
</protein>
<feature type="chain" id="PRO_0000192158" description="Bifunctional purine biosynthesis protein ade10">
    <location>
        <begin position="1"/>
        <end position="585"/>
    </location>
</feature>
<feature type="domain" description="MGS-like" evidence="4">
    <location>
        <begin position="1"/>
        <end position="142"/>
    </location>
</feature>
<feature type="active site" description="Proton donor/acceptor; for FAICAR cyclization activity" evidence="2">
    <location>
        <position position="133"/>
    </location>
</feature>
<feature type="active site" description="Proton acceptor; for AICAR formyltransferase activity" evidence="2">
    <location>
        <position position="260"/>
    </location>
</feature>
<feature type="binding site" evidence="2">
    <location>
        <begin position="30"/>
        <end position="33"/>
    </location>
    <ligand>
        <name>IMP</name>
        <dbReference type="ChEBI" id="CHEBI:58053"/>
    </ligand>
</feature>
<feature type="binding site" evidence="2">
    <location>
        <begin position="60"/>
        <end position="63"/>
    </location>
    <ligand>
        <name>IMP</name>
        <dbReference type="ChEBI" id="CHEBI:58053"/>
    </ligand>
</feature>
<feature type="binding site" evidence="2">
    <location>
        <begin position="97"/>
        <end position="98"/>
    </location>
    <ligand>
        <name>IMP</name>
        <dbReference type="ChEBI" id="CHEBI:58053"/>
    </ligand>
</feature>
<feature type="binding site" evidence="2">
    <location>
        <begin position="121"/>
        <end position="122"/>
    </location>
    <ligand>
        <name>IMP</name>
        <dbReference type="ChEBI" id="CHEBI:58053"/>
    </ligand>
</feature>
<feature type="binding site" description="in other chain" evidence="2">
    <location>
        <begin position="200"/>
        <end position="201"/>
    </location>
    <ligand>
        <name>5-amino-1-(5-phospho-beta-D-ribosyl)imidazole-4-carboxamide</name>
        <dbReference type="ChEBI" id="CHEBI:58475"/>
        <note>ligand shared between dimeric partners</note>
    </ligand>
</feature>
<feature type="binding site" description="in other chain" evidence="2">
    <location>
        <position position="260"/>
    </location>
    <ligand>
        <name>5-amino-1-(5-phospho-beta-D-ribosyl)imidazole-4-carboxamide</name>
        <dbReference type="ChEBI" id="CHEBI:58475"/>
        <note>ligand shared between dimeric partners</note>
    </ligand>
</feature>
<feature type="binding site" description="in other chain" evidence="2">
    <location>
        <position position="308"/>
    </location>
    <ligand>
        <name>5-amino-1-(5-phospho-beta-D-ribosyl)imidazole-4-carboxamide</name>
        <dbReference type="ChEBI" id="CHEBI:58475"/>
        <note>ligand shared between dimeric partners</note>
    </ligand>
</feature>
<feature type="binding site" description="in other chain" evidence="2">
    <location>
        <position position="331"/>
    </location>
    <ligand>
        <name>5-amino-1-(5-phospho-beta-D-ribosyl)imidazole-4-carboxamide</name>
        <dbReference type="ChEBI" id="CHEBI:58475"/>
        <note>ligand shared between dimeric partners</note>
    </ligand>
</feature>
<feature type="binding site" evidence="2">
    <location>
        <position position="423"/>
    </location>
    <ligand>
        <name>5-amino-1-(5-phospho-beta-D-ribosyl)imidazole-4-carboxamide</name>
        <dbReference type="ChEBI" id="CHEBI:58475"/>
        <note>ligand shared between dimeric partners</note>
    </ligand>
</feature>
<feature type="binding site" evidence="2">
    <location>
        <position position="443"/>
    </location>
    <ligand>
        <name>5-amino-1-(5-phospho-beta-D-ribosyl)imidazole-4-carboxamide</name>
        <dbReference type="ChEBI" id="CHEBI:58475"/>
        <note>ligand shared between dimeric partners</note>
    </ligand>
</feature>
<feature type="binding site" evidence="1">
    <location>
        <position position="444"/>
    </location>
    <ligand>
        <name>(6R)-10-formyltetrahydrofolate</name>
        <dbReference type="ChEBI" id="CHEBI:195366"/>
    </ligand>
</feature>
<feature type="binding site" evidence="2">
    <location>
        <position position="534"/>
    </location>
    <ligand>
        <name>5-amino-1-(5-phospho-beta-D-ribosyl)imidazole-4-carboxamide</name>
        <dbReference type="ChEBI" id="CHEBI:58475"/>
        <note>ligand shared between dimeric partners</note>
    </ligand>
</feature>
<feature type="binding site" evidence="1">
    <location>
        <position position="539"/>
    </location>
    <ligand>
        <name>(6R)-10-formyltetrahydrofolate</name>
        <dbReference type="ChEBI" id="CHEBI:195366"/>
    </ligand>
</feature>
<feature type="binding site" evidence="1">
    <location>
        <begin position="558"/>
        <end position="559"/>
    </location>
    <ligand>
        <name>(6R)-10-formyltetrahydrofolate</name>
        <dbReference type="ChEBI" id="CHEBI:195366"/>
    </ligand>
</feature>
<feature type="binding site" evidence="2">
    <location>
        <position position="581"/>
    </location>
    <ligand>
        <name>5-amino-1-(5-phospho-beta-D-ribosyl)imidazole-4-carboxamide</name>
        <dbReference type="ChEBI" id="CHEBI:58475"/>
        <note>ligand shared between dimeric partners</note>
    </ligand>
</feature>
<feature type="site" description="Transition state stabilizer" evidence="2">
    <location>
        <position position="259"/>
    </location>
</feature>
<feature type="sequence conflict" description="In Ref. 3; BAA13904." evidence="5" ref="3">
    <original>K</original>
    <variation>Q</variation>
    <location>
        <position position="404"/>
    </location>
</feature>
<comment type="function">
    <text evidence="3">Bifunctional enzyme that catalyzes the last two steps of purine biosynthesis. Acts as a transformylase that incorporates a formyl group to the AMP analog AICAR (5-amino-1-(5-phospho-beta-D-ribosyl)imidazole-4-carboxamide) to produce the intermediate formyl-AICAR (FAICAR). Also catalyzes the cyclization of FAICAR to IMP.</text>
</comment>
<comment type="catalytic activity">
    <reaction evidence="3">
        <text>(6R)-10-formyltetrahydrofolate + 5-amino-1-(5-phospho-beta-D-ribosyl)imidazole-4-carboxamide = 5-formamido-1-(5-phospho-D-ribosyl)imidazole-4-carboxamide + (6S)-5,6,7,8-tetrahydrofolate</text>
        <dbReference type="Rhea" id="RHEA:22192"/>
        <dbReference type="ChEBI" id="CHEBI:57453"/>
        <dbReference type="ChEBI" id="CHEBI:58467"/>
        <dbReference type="ChEBI" id="CHEBI:58475"/>
        <dbReference type="ChEBI" id="CHEBI:195366"/>
        <dbReference type="EC" id="2.1.2.3"/>
    </reaction>
</comment>
<comment type="catalytic activity">
    <reaction evidence="3">
        <text>IMP + H2O = 5-formamido-1-(5-phospho-D-ribosyl)imidazole-4-carboxamide</text>
        <dbReference type="Rhea" id="RHEA:18445"/>
        <dbReference type="ChEBI" id="CHEBI:15377"/>
        <dbReference type="ChEBI" id="CHEBI:58053"/>
        <dbReference type="ChEBI" id="CHEBI:58467"/>
        <dbReference type="EC" id="3.5.4.10"/>
    </reaction>
</comment>
<comment type="pathway">
    <text>Purine metabolism; IMP biosynthesis via de novo pathway; 5-formamido-1-(5-phospho-D-ribosyl)imidazole-4-carboxamide from 5-amino-1-(5-phospho-D-ribosyl)imidazole-4-carboxamide (10-formyl THF route): step 1/1.</text>
</comment>
<comment type="pathway">
    <text>Purine metabolism; IMP biosynthesis via de novo pathway; IMP from 5-formamido-1-(5-phospho-D-ribosyl)imidazole-4-carboxamide: step 1/1.</text>
</comment>
<comment type="subunit">
    <text evidence="3">Homodimer.</text>
</comment>
<comment type="subcellular location">
    <subcellularLocation>
        <location evidence="3">Cytoplasm</location>
        <location evidence="3">Cytosol</location>
    </subcellularLocation>
</comment>
<comment type="domain">
    <text evidence="2">The IMP cyclohydrolase activity resides in the N-terminal region.</text>
</comment>
<comment type="similarity">
    <text evidence="5">Belongs to the PurH family.</text>
</comment>
<organism>
    <name type="scientific">Schizosaccharomyces pombe (strain 972 / ATCC 24843)</name>
    <name type="common">Fission yeast</name>
    <dbReference type="NCBI Taxonomy" id="284812"/>
    <lineage>
        <taxon>Eukaryota</taxon>
        <taxon>Fungi</taxon>
        <taxon>Dikarya</taxon>
        <taxon>Ascomycota</taxon>
        <taxon>Taphrinomycotina</taxon>
        <taxon>Schizosaccharomycetes</taxon>
        <taxon>Schizosaccharomycetales</taxon>
        <taxon>Schizosaccharomycetaceae</taxon>
        <taxon>Schizosaccharomyces</taxon>
    </lineage>
</organism>
<proteinExistence type="evidence at transcript level"/>
<gene>
    <name type="primary">ade10</name>
    <name type="ORF">SPCPB16A4.03c</name>
</gene>
<keyword id="KW-0963">Cytoplasm</keyword>
<keyword id="KW-0378">Hydrolase</keyword>
<keyword id="KW-0511">Multifunctional enzyme</keyword>
<keyword id="KW-0658">Purine biosynthesis</keyword>
<keyword id="KW-1185">Reference proteome</keyword>
<keyword id="KW-0808">Transferase</keyword>
<accession>O74928</accession>
<accession>P78892</accession>
<evidence type="ECO:0000250" key="1">
    <source>
        <dbReference type="UniProtKB" id="P31335"/>
    </source>
</evidence>
<evidence type="ECO:0000250" key="2">
    <source>
        <dbReference type="UniProtKB" id="P31939"/>
    </source>
</evidence>
<evidence type="ECO:0000250" key="3">
    <source>
        <dbReference type="UniProtKB" id="P54113"/>
    </source>
</evidence>
<evidence type="ECO:0000255" key="4">
    <source>
        <dbReference type="PROSITE-ProRule" id="PRU01202"/>
    </source>
</evidence>
<evidence type="ECO:0000305" key="5"/>
<dbReference type="EC" id="2.1.2.3" evidence="3"/>
<dbReference type="EC" id="3.5.4.10" evidence="3"/>
<dbReference type="EMBL" id="Y16419">
    <property type="protein sequence ID" value="CAA76207.1"/>
    <property type="molecule type" value="Genomic_DNA"/>
</dbReference>
<dbReference type="EMBL" id="CU329672">
    <property type="protein sequence ID" value="CAC39322.1"/>
    <property type="molecule type" value="Genomic_DNA"/>
</dbReference>
<dbReference type="EMBL" id="D89243">
    <property type="protein sequence ID" value="BAA13904.1"/>
    <property type="molecule type" value="mRNA"/>
</dbReference>
<dbReference type="PIR" id="T43150">
    <property type="entry name" value="T43150"/>
</dbReference>
<dbReference type="RefSeq" id="NP_588027.1">
    <property type="nucleotide sequence ID" value="NM_001023018.2"/>
</dbReference>
<dbReference type="SMR" id="O74928"/>
<dbReference type="BioGRID" id="276129">
    <property type="interactions" value="15"/>
</dbReference>
<dbReference type="FunCoup" id="O74928">
    <property type="interactions" value="864"/>
</dbReference>
<dbReference type="STRING" id="284812.O74928"/>
<dbReference type="iPTMnet" id="O74928"/>
<dbReference type="PaxDb" id="4896-SPCPB16A4.03c.1"/>
<dbReference type="EnsemblFungi" id="SPCPB16A4.03c.1">
    <property type="protein sequence ID" value="SPCPB16A4.03c.1:pep"/>
    <property type="gene ID" value="SPCPB16A4.03c"/>
</dbReference>
<dbReference type="GeneID" id="2539569"/>
<dbReference type="KEGG" id="spo:2539569"/>
<dbReference type="PomBase" id="SPCPB16A4.03c">
    <property type="gene designation" value="ade10"/>
</dbReference>
<dbReference type="VEuPathDB" id="FungiDB:SPCPB16A4.03c"/>
<dbReference type="eggNOG" id="KOG2555">
    <property type="taxonomic scope" value="Eukaryota"/>
</dbReference>
<dbReference type="HOGENOM" id="CLU_016316_3_2_1"/>
<dbReference type="InParanoid" id="O74928"/>
<dbReference type="OMA" id="IKHNNPC"/>
<dbReference type="PhylomeDB" id="O74928"/>
<dbReference type="Reactome" id="R-SPO-73817">
    <property type="pathway name" value="Purine ribonucleoside monophosphate biosynthesis"/>
</dbReference>
<dbReference type="UniPathway" id="UPA00074">
    <property type="reaction ID" value="UER00133"/>
</dbReference>
<dbReference type="UniPathway" id="UPA00074">
    <property type="reaction ID" value="UER00135"/>
</dbReference>
<dbReference type="PRO" id="PR:O74928"/>
<dbReference type="Proteomes" id="UP000002485">
    <property type="component" value="Chromosome III"/>
</dbReference>
<dbReference type="GO" id="GO:0005829">
    <property type="term" value="C:cytosol"/>
    <property type="evidence" value="ECO:0007005"/>
    <property type="project" value="PomBase"/>
</dbReference>
<dbReference type="GO" id="GO:0003937">
    <property type="term" value="F:IMP cyclohydrolase activity"/>
    <property type="evidence" value="ECO:0000314"/>
    <property type="project" value="PomBase"/>
</dbReference>
<dbReference type="GO" id="GO:0004643">
    <property type="term" value="F:phosphoribosylaminoimidazolecarboxamide formyltransferase activity"/>
    <property type="evidence" value="ECO:0000314"/>
    <property type="project" value="PomBase"/>
</dbReference>
<dbReference type="GO" id="GO:0006189">
    <property type="term" value="P:'de novo' IMP biosynthetic process"/>
    <property type="evidence" value="ECO:0000315"/>
    <property type="project" value="PomBase"/>
</dbReference>
<dbReference type="GO" id="GO:0006188">
    <property type="term" value="P:IMP biosynthetic process"/>
    <property type="evidence" value="ECO:0000315"/>
    <property type="project" value="PomBase"/>
</dbReference>
<dbReference type="CDD" id="cd01421">
    <property type="entry name" value="IMPCH"/>
    <property type="match status" value="1"/>
</dbReference>
<dbReference type="FunFam" id="3.40.140.20:FF:000003">
    <property type="entry name" value="Bifunctional purine biosynthesis protein"/>
    <property type="match status" value="1"/>
</dbReference>
<dbReference type="FunFam" id="3.40.50.1380:FF:000003">
    <property type="entry name" value="Bifunctional purine biosynthesis protein"/>
    <property type="match status" value="1"/>
</dbReference>
<dbReference type="FunFam" id="1.10.287.440:FF:000001">
    <property type="entry name" value="Bifunctional purine biosynthesis protein PURH"/>
    <property type="match status" value="1"/>
</dbReference>
<dbReference type="Gene3D" id="1.10.287.440">
    <property type="match status" value="1"/>
</dbReference>
<dbReference type="Gene3D" id="3.40.140.20">
    <property type="match status" value="2"/>
</dbReference>
<dbReference type="Gene3D" id="3.40.50.1380">
    <property type="entry name" value="Methylglyoxal synthase-like domain"/>
    <property type="match status" value="1"/>
</dbReference>
<dbReference type="HAMAP" id="MF_00139">
    <property type="entry name" value="PurH"/>
    <property type="match status" value="1"/>
</dbReference>
<dbReference type="InterPro" id="IPR024051">
    <property type="entry name" value="AICAR_Tfase_dup_dom_sf"/>
</dbReference>
<dbReference type="InterPro" id="IPR024050">
    <property type="entry name" value="AICAR_Tfase_insert_dom_sf"/>
</dbReference>
<dbReference type="InterPro" id="IPR016193">
    <property type="entry name" value="Cytidine_deaminase-like"/>
</dbReference>
<dbReference type="InterPro" id="IPR011607">
    <property type="entry name" value="MGS-like_dom"/>
</dbReference>
<dbReference type="InterPro" id="IPR036914">
    <property type="entry name" value="MGS-like_dom_sf"/>
</dbReference>
<dbReference type="InterPro" id="IPR002695">
    <property type="entry name" value="PurH-like"/>
</dbReference>
<dbReference type="NCBIfam" id="NF005492">
    <property type="entry name" value="PRK07106.1"/>
    <property type="match status" value="1"/>
</dbReference>
<dbReference type="NCBIfam" id="TIGR00355">
    <property type="entry name" value="purH"/>
    <property type="match status" value="1"/>
</dbReference>
<dbReference type="PANTHER" id="PTHR11692:SF0">
    <property type="entry name" value="BIFUNCTIONAL PURINE BIOSYNTHESIS PROTEIN ATIC"/>
    <property type="match status" value="1"/>
</dbReference>
<dbReference type="PANTHER" id="PTHR11692">
    <property type="entry name" value="BIFUNCTIONAL PURINE BIOSYNTHESIS PROTEIN PURH"/>
    <property type="match status" value="1"/>
</dbReference>
<dbReference type="Pfam" id="PF01808">
    <property type="entry name" value="AICARFT_IMPCHas"/>
    <property type="match status" value="1"/>
</dbReference>
<dbReference type="Pfam" id="PF02142">
    <property type="entry name" value="MGS"/>
    <property type="match status" value="1"/>
</dbReference>
<dbReference type="PIRSF" id="PIRSF000414">
    <property type="entry name" value="AICARFT_IMPCHas"/>
    <property type="match status" value="1"/>
</dbReference>
<dbReference type="SMART" id="SM00798">
    <property type="entry name" value="AICARFT_IMPCHas"/>
    <property type="match status" value="1"/>
</dbReference>
<dbReference type="SMART" id="SM00851">
    <property type="entry name" value="MGS"/>
    <property type="match status" value="1"/>
</dbReference>
<dbReference type="SUPFAM" id="SSF53927">
    <property type="entry name" value="Cytidine deaminase-like"/>
    <property type="match status" value="1"/>
</dbReference>
<dbReference type="SUPFAM" id="SSF52335">
    <property type="entry name" value="Methylglyoxal synthase-like"/>
    <property type="match status" value="1"/>
</dbReference>
<dbReference type="PROSITE" id="PS51855">
    <property type="entry name" value="MGS"/>
    <property type="match status" value="1"/>
</dbReference>
<name>PUR9_SCHPO</name>